<sequence length="372" mass="40114">MKIGIPREIKNNENRVGLSPSGVHALVESGHTVLVETNAGSGSFFEDVDYKEAGAEIVAEQAKVWDVDMVIKVKEPLESEYPYFKEGLVLFTYLHLANEEKLTQALIDRKVISIAYETVQLPDRSLPLLSPMSEVAGRMSAQVGAEFLQKLNGGMGILLGGVPGVPKGKVTIIGGGQAGTNAAKIALGLGADVTILDVNPKRLQQLDDLFGGRVHTIMSNPLNIELYVKQSDLVIGAVLIPGAKAPRLVTEDMIKQMKNGSVIIDIAIDQGGIFETTDKITTHDDPTYIKHGVVHYAVANMPGAVPRTSTLALNNATLPYALMLANKGYREAFKSNQPLSLGLNTYKGHVTNKGVAEAFEMEYKSVEEALHL</sequence>
<dbReference type="EC" id="1.4.1.1"/>
<dbReference type="EMBL" id="BX571856">
    <property type="protein sequence ID" value="CAG40778.1"/>
    <property type="molecule type" value="Genomic_DNA"/>
</dbReference>
<dbReference type="SMR" id="Q6GFZ8"/>
<dbReference type="KEGG" id="sar:SAR1787"/>
<dbReference type="HOGENOM" id="CLU_003376_3_0_9"/>
<dbReference type="UniPathway" id="UPA00527">
    <property type="reaction ID" value="UER00585"/>
</dbReference>
<dbReference type="Proteomes" id="UP000000596">
    <property type="component" value="Chromosome"/>
</dbReference>
<dbReference type="GO" id="GO:0005886">
    <property type="term" value="C:plasma membrane"/>
    <property type="evidence" value="ECO:0007669"/>
    <property type="project" value="TreeGrafter"/>
</dbReference>
<dbReference type="GO" id="GO:0000286">
    <property type="term" value="F:alanine dehydrogenase activity"/>
    <property type="evidence" value="ECO:0007669"/>
    <property type="project" value="UniProtKB-EC"/>
</dbReference>
<dbReference type="GO" id="GO:0042853">
    <property type="term" value="P:L-alanine catabolic process"/>
    <property type="evidence" value="ECO:0007669"/>
    <property type="project" value="UniProtKB-UniPathway"/>
</dbReference>
<dbReference type="CDD" id="cd05305">
    <property type="entry name" value="L-AlaDH"/>
    <property type="match status" value="1"/>
</dbReference>
<dbReference type="FunFam" id="3.40.50.720:FF:000049">
    <property type="entry name" value="Alanine dehydrogenase"/>
    <property type="match status" value="1"/>
</dbReference>
<dbReference type="Gene3D" id="3.40.50.720">
    <property type="entry name" value="NAD(P)-binding Rossmann-like Domain"/>
    <property type="match status" value="2"/>
</dbReference>
<dbReference type="InterPro" id="IPR008141">
    <property type="entry name" value="Ala_DH"/>
</dbReference>
<dbReference type="InterPro" id="IPR008143">
    <property type="entry name" value="Ala_DH/PNT_CS2"/>
</dbReference>
<dbReference type="InterPro" id="IPR008142">
    <property type="entry name" value="AlaDH/PNT_CS1"/>
</dbReference>
<dbReference type="InterPro" id="IPR007886">
    <property type="entry name" value="AlaDH/PNT_N"/>
</dbReference>
<dbReference type="InterPro" id="IPR007698">
    <property type="entry name" value="AlaDH/PNT_NAD(H)-bd"/>
</dbReference>
<dbReference type="InterPro" id="IPR036291">
    <property type="entry name" value="NAD(P)-bd_dom_sf"/>
</dbReference>
<dbReference type="NCBIfam" id="TIGR00518">
    <property type="entry name" value="alaDH"/>
    <property type="match status" value="1"/>
</dbReference>
<dbReference type="PANTHER" id="PTHR42795">
    <property type="entry name" value="ALANINE DEHYDROGENASE"/>
    <property type="match status" value="1"/>
</dbReference>
<dbReference type="PANTHER" id="PTHR42795:SF1">
    <property type="entry name" value="ALANINE DEHYDROGENASE"/>
    <property type="match status" value="1"/>
</dbReference>
<dbReference type="Pfam" id="PF01262">
    <property type="entry name" value="AlaDh_PNT_C"/>
    <property type="match status" value="1"/>
</dbReference>
<dbReference type="Pfam" id="PF05222">
    <property type="entry name" value="AlaDh_PNT_N"/>
    <property type="match status" value="1"/>
</dbReference>
<dbReference type="PIRSF" id="PIRSF000183">
    <property type="entry name" value="Alanine_dh"/>
    <property type="match status" value="1"/>
</dbReference>
<dbReference type="SMART" id="SM01002">
    <property type="entry name" value="AlaDh_PNT_C"/>
    <property type="match status" value="1"/>
</dbReference>
<dbReference type="SMART" id="SM01003">
    <property type="entry name" value="AlaDh_PNT_N"/>
    <property type="match status" value="1"/>
</dbReference>
<dbReference type="SUPFAM" id="SSF52283">
    <property type="entry name" value="Formate/glycerate dehydrogenase catalytic domain-like"/>
    <property type="match status" value="1"/>
</dbReference>
<dbReference type="SUPFAM" id="SSF51735">
    <property type="entry name" value="NAD(P)-binding Rossmann-fold domains"/>
    <property type="match status" value="1"/>
</dbReference>
<dbReference type="PROSITE" id="PS00836">
    <property type="entry name" value="ALADH_PNT_1"/>
    <property type="match status" value="1"/>
</dbReference>
<dbReference type="PROSITE" id="PS00837">
    <property type="entry name" value="ALADH_PNT_2"/>
    <property type="match status" value="1"/>
</dbReference>
<evidence type="ECO:0000250" key="1"/>
<evidence type="ECO:0000255" key="2"/>
<evidence type="ECO:0000305" key="3"/>
<accession>Q6GFZ8</accession>
<protein>
    <recommendedName>
        <fullName>Alanine dehydrogenase 2</fullName>
        <ecNumber>1.4.1.1</ecNumber>
    </recommendedName>
</protein>
<comment type="function">
    <text evidence="1">May play a role in cell wall synthesis as L-alanine is an important constituent of the peptidoglycan layer.</text>
</comment>
<comment type="catalytic activity">
    <reaction>
        <text>L-alanine + NAD(+) + H2O = pyruvate + NH4(+) + NADH + H(+)</text>
        <dbReference type="Rhea" id="RHEA:18405"/>
        <dbReference type="ChEBI" id="CHEBI:15361"/>
        <dbReference type="ChEBI" id="CHEBI:15377"/>
        <dbReference type="ChEBI" id="CHEBI:15378"/>
        <dbReference type="ChEBI" id="CHEBI:28938"/>
        <dbReference type="ChEBI" id="CHEBI:57540"/>
        <dbReference type="ChEBI" id="CHEBI:57945"/>
        <dbReference type="ChEBI" id="CHEBI:57972"/>
        <dbReference type="EC" id="1.4.1.1"/>
    </reaction>
</comment>
<comment type="pathway">
    <text>Amino-acid degradation; L-alanine degradation via dehydrogenase pathway; NH(3) and pyruvate from L-alanine: step 1/1.</text>
</comment>
<comment type="similarity">
    <text evidence="3">Belongs to the AlaDH/PNT family.</text>
</comment>
<keyword id="KW-0520">NAD</keyword>
<keyword id="KW-0560">Oxidoreductase</keyword>
<gene>
    <name type="primary">ald2</name>
    <name type="ordered locus">SAR1787</name>
</gene>
<feature type="chain" id="PRO_0000199004" description="Alanine dehydrogenase 2">
    <location>
        <begin position="1"/>
        <end position="372"/>
    </location>
</feature>
<feature type="active site" evidence="2">
    <location>
        <position position="95"/>
    </location>
</feature>
<feature type="binding site" evidence="1">
    <location>
        <begin position="169"/>
        <end position="199"/>
    </location>
    <ligand>
        <name>NAD(+)</name>
        <dbReference type="ChEBI" id="CHEBI:57540"/>
    </ligand>
</feature>
<reference key="1">
    <citation type="journal article" date="2004" name="Proc. Natl. Acad. Sci. U.S.A.">
        <title>Complete genomes of two clinical Staphylococcus aureus strains: evidence for the rapid evolution of virulence and drug resistance.</title>
        <authorList>
            <person name="Holden M.T.G."/>
            <person name="Feil E.J."/>
            <person name="Lindsay J.A."/>
            <person name="Peacock S.J."/>
            <person name="Day N.P.J."/>
            <person name="Enright M.C."/>
            <person name="Foster T.J."/>
            <person name="Moore C.E."/>
            <person name="Hurst L."/>
            <person name="Atkin R."/>
            <person name="Barron A."/>
            <person name="Bason N."/>
            <person name="Bentley S.D."/>
            <person name="Chillingworth C."/>
            <person name="Chillingworth T."/>
            <person name="Churcher C."/>
            <person name="Clark L."/>
            <person name="Corton C."/>
            <person name="Cronin A."/>
            <person name="Doggett J."/>
            <person name="Dowd L."/>
            <person name="Feltwell T."/>
            <person name="Hance Z."/>
            <person name="Harris B."/>
            <person name="Hauser H."/>
            <person name="Holroyd S."/>
            <person name="Jagels K."/>
            <person name="James K.D."/>
            <person name="Lennard N."/>
            <person name="Line A."/>
            <person name="Mayes R."/>
            <person name="Moule S."/>
            <person name="Mungall K."/>
            <person name="Ormond D."/>
            <person name="Quail M.A."/>
            <person name="Rabbinowitsch E."/>
            <person name="Rutherford K.M."/>
            <person name="Sanders M."/>
            <person name="Sharp S."/>
            <person name="Simmonds M."/>
            <person name="Stevens K."/>
            <person name="Whitehead S."/>
            <person name="Barrell B.G."/>
            <person name="Spratt B.G."/>
            <person name="Parkhill J."/>
        </authorList>
    </citation>
    <scope>NUCLEOTIDE SEQUENCE [LARGE SCALE GENOMIC DNA]</scope>
    <source>
        <strain>MRSA252</strain>
    </source>
</reference>
<proteinExistence type="inferred from homology"/>
<name>DHA2_STAAR</name>
<organism>
    <name type="scientific">Staphylococcus aureus (strain MRSA252)</name>
    <dbReference type="NCBI Taxonomy" id="282458"/>
    <lineage>
        <taxon>Bacteria</taxon>
        <taxon>Bacillati</taxon>
        <taxon>Bacillota</taxon>
        <taxon>Bacilli</taxon>
        <taxon>Bacillales</taxon>
        <taxon>Staphylococcaceae</taxon>
        <taxon>Staphylococcus</taxon>
    </lineage>
</organism>